<dbReference type="EC" id="2.7.7.1" evidence="1"/>
<dbReference type="EC" id="2.7.7.18" evidence="1"/>
<dbReference type="EMBL" id="CR543861">
    <property type="protein sequence ID" value="CAG69366.1"/>
    <property type="molecule type" value="Genomic_DNA"/>
</dbReference>
<dbReference type="RefSeq" id="WP_004928791.1">
    <property type="nucleotide sequence ID" value="NC_005966.1"/>
</dbReference>
<dbReference type="SMR" id="Q6F999"/>
<dbReference type="STRING" id="202950.GCA_001485005_01414"/>
<dbReference type="GeneID" id="45234887"/>
<dbReference type="KEGG" id="aci:ACIAD2606"/>
<dbReference type="eggNOG" id="COG1056">
    <property type="taxonomic scope" value="Bacteria"/>
</dbReference>
<dbReference type="HOGENOM" id="CLU_1302722_0_0_6"/>
<dbReference type="OrthoDB" id="542521at2"/>
<dbReference type="BioCyc" id="ASP62977:ACIAD_RS11850-MONOMER"/>
<dbReference type="UniPathway" id="UPA00253">
    <property type="reaction ID" value="UER00332"/>
</dbReference>
<dbReference type="UniPathway" id="UPA00253">
    <property type="reaction ID" value="UER00600"/>
</dbReference>
<dbReference type="Proteomes" id="UP000000430">
    <property type="component" value="Chromosome"/>
</dbReference>
<dbReference type="GO" id="GO:0005524">
    <property type="term" value="F:ATP binding"/>
    <property type="evidence" value="ECO:0007669"/>
    <property type="project" value="UniProtKB-KW"/>
</dbReference>
<dbReference type="GO" id="GO:0000309">
    <property type="term" value="F:nicotinamide-nucleotide adenylyltransferase activity"/>
    <property type="evidence" value="ECO:0007669"/>
    <property type="project" value="UniProtKB-EC"/>
</dbReference>
<dbReference type="GO" id="GO:0004515">
    <property type="term" value="F:nicotinate-nucleotide adenylyltransferase activity"/>
    <property type="evidence" value="ECO:0007669"/>
    <property type="project" value="UniProtKB-EC"/>
</dbReference>
<dbReference type="GO" id="GO:0009435">
    <property type="term" value="P:NAD biosynthetic process"/>
    <property type="evidence" value="ECO:0007669"/>
    <property type="project" value="UniProtKB-UniPathway"/>
</dbReference>
<dbReference type="CDD" id="cd02168">
    <property type="entry name" value="NMNAT_Nudix"/>
    <property type="match status" value="1"/>
</dbReference>
<dbReference type="Gene3D" id="3.40.50.620">
    <property type="entry name" value="HUPs"/>
    <property type="match status" value="1"/>
</dbReference>
<dbReference type="InterPro" id="IPR004821">
    <property type="entry name" value="Cyt_trans-like"/>
</dbReference>
<dbReference type="InterPro" id="IPR041750">
    <property type="entry name" value="NMNAT_Nudix"/>
</dbReference>
<dbReference type="InterPro" id="IPR014729">
    <property type="entry name" value="Rossmann-like_a/b/a_fold"/>
</dbReference>
<dbReference type="NCBIfam" id="TIGR00125">
    <property type="entry name" value="cyt_tran_rel"/>
    <property type="match status" value="1"/>
</dbReference>
<dbReference type="NCBIfam" id="NF010365">
    <property type="entry name" value="PRK13793.1"/>
    <property type="match status" value="1"/>
</dbReference>
<dbReference type="PANTHER" id="PTHR21342:SF0">
    <property type="entry name" value="BIFUNCTIONAL NMN ADENYLYLTRANSFERASE_NUDIX HYDROLASE"/>
    <property type="match status" value="1"/>
</dbReference>
<dbReference type="PANTHER" id="PTHR21342">
    <property type="entry name" value="PHOSPHOPANTETHEINE ADENYLYLTRANSFERASE"/>
    <property type="match status" value="1"/>
</dbReference>
<dbReference type="Pfam" id="PF01467">
    <property type="entry name" value="CTP_transf_like"/>
    <property type="match status" value="1"/>
</dbReference>
<dbReference type="SUPFAM" id="SSF52374">
    <property type="entry name" value="Nucleotidylyl transferase"/>
    <property type="match status" value="1"/>
</dbReference>
<proteinExistence type="evidence at protein level"/>
<organism>
    <name type="scientific">Acinetobacter baylyi (strain ATCC 33305 / BD413 / ADP1)</name>
    <dbReference type="NCBI Taxonomy" id="62977"/>
    <lineage>
        <taxon>Bacteria</taxon>
        <taxon>Pseudomonadati</taxon>
        <taxon>Pseudomonadota</taxon>
        <taxon>Gammaproteobacteria</taxon>
        <taxon>Moraxellales</taxon>
        <taxon>Moraxellaceae</taxon>
        <taxon>Acinetobacter</taxon>
    </lineage>
</organism>
<feature type="chain" id="PRO_0000457834" description="Nicotinamide/nicotinic acid mononucleotide adenylyltransferase">
    <location>
        <begin position="1"/>
        <end position="188"/>
    </location>
</feature>
<comment type="function">
    <text evidence="1">Dual substrate specificity enzyme that catalyzes the formation of NAD(+) from nicotinamide mononucleotide (NMN) and the formation of deamido-NAD(+) (NaAD) from nicotinate mononucleotide (NaMN) (PubMed:20926389). Shows nearly identical catalytic efficiency for both physiological substrates (PubMed:20926389). Plays an essential role in all three routes of NAD biogenesis, de novo synthesis as well as the deamidating and nondeamidating salvage pathways (PubMed:20926389).</text>
</comment>
<comment type="catalytic activity">
    <reaction evidence="1">
        <text>beta-nicotinamide D-ribonucleotide + ATP + H(+) = diphosphate + NAD(+)</text>
        <dbReference type="Rhea" id="RHEA:21360"/>
        <dbReference type="ChEBI" id="CHEBI:14649"/>
        <dbReference type="ChEBI" id="CHEBI:15378"/>
        <dbReference type="ChEBI" id="CHEBI:30616"/>
        <dbReference type="ChEBI" id="CHEBI:33019"/>
        <dbReference type="ChEBI" id="CHEBI:57540"/>
        <dbReference type="EC" id="2.7.7.1"/>
    </reaction>
    <physiologicalReaction direction="left-to-right" evidence="1">
        <dbReference type="Rhea" id="RHEA:21361"/>
    </physiologicalReaction>
</comment>
<comment type="catalytic activity">
    <reaction evidence="1">
        <text>nicotinate beta-D-ribonucleotide + ATP + H(+) = deamido-NAD(+) + diphosphate</text>
        <dbReference type="Rhea" id="RHEA:22860"/>
        <dbReference type="ChEBI" id="CHEBI:15378"/>
        <dbReference type="ChEBI" id="CHEBI:30616"/>
        <dbReference type="ChEBI" id="CHEBI:33019"/>
        <dbReference type="ChEBI" id="CHEBI:57502"/>
        <dbReference type="ChEBI" id="CHEBI:58437"/>
        <dbReference type="EC" id="2.7.7.18"/>
    </reaction>
    <physiologicalReaction direction="left-to-right" evidence="1">
        <dbReference type="Rhea" id="RHEA:22861"/>
    </physiologicalReaction>
</comment>
<comment type="biophysicochemical properties">
    <kinetics>
        <KM evidence="1">0.027 mM for nicotinamide mononucleotide</KM>
        <KM evidence="1">0.013 mM for nicotinate mononucleotide</KM>
        <text evidence="1">kcat is 4.9 sec(-1) with nicotinamide mononucleotide as substrate. kcat is 3.0 sec(-1) with nicotinate mononucleotide as substrate.</text>
    </kinetics>
</comment>
<comment type="pathway">
    <text evidence="1">Cofactor biosynthesis; NAD(+) biosynthesis; NAD(+) from nicotinamide D-ribonucleotide: step 1/1.</text>
</comment>
<comment type="pathway">
    <text evidence="1">Cofactor biosynthesis; NAD(+) biosynthesis; deamido-NAD(+) from nicotinate D-ribonucleotide: step 1/1.</text>
</comment>
<comment type="disruption phenotype">
    <text evidence="1">Essential, cannot be deleted (PubMed:20926389). Deletion of the gene could be accomplished only with complementation by another NaMNAT or NMNAT encoding gene (PubMed:20926389).</text>
</comment>
<comment type="miscellaneous">
    <text evidence="1">Identified as an attractive target for the development of novel antibiotics against pathogenic strains of A.baumannii.</text>
</comment>
<comment type="similarity">
    <text evidence="3">Belongs to the archaeal NMN adenylyltransferase family.</text>
</comment>
<gene>
    <name evidence="2" type="primary">nadM</name>
    <name evidence="4" type="ordered locus">ACIAD2606</name>
</gene>
<name>NADM_ACIAD</name>
<sequence>MYKFDYLVFIGRFQPFHFAHLQTIQIALQQSREVIIALGSAQPERNIKNPFLAEERQKMILANFSAEDQARIHFVNIIDVYNDQKWVEQVKQLVNAIIESRSHVGLIGHFKDESSYYLKLFPEWTMVELESLKESMSATPMREAYYEGKIIESAFPEGTIQFLKTFQDSEIYKQLQQKYRAQDSSNLI</sequence>
<accession>Q6F999</accession>
<protein>
    <recommendedName>
        <fullName evidence="3">Nicotinamide/nicotinic acid mononucleotide adenylyltransferase</fullName>
        <shortName evidence="2">NMN/NaMN adenylyltransferase</shortName>
        <shortName evidence="2">NMNAT/NaMNAT</shortName>
        <ecNumber evidence="1">2.7.7.1</ecNumber>
        <ecNumber evidence="1">2.7.7.18</ecNumber>
    </recommendedName>
</protein>
<keyword id="KW-0067">ATP-binding</keyword>
<keyword id="KW-0520">NAD</keyword>
<keyword id="KW-0547">Nucleotide-binding</keyword>
<keyword id="KW-0548">Nucleotidyltransferase</keyword>
<keyword id="KW-0662">Pyridine nucleotide biosynthesis</keyword>
<keyword id="KW-0808">Transferase</keyword>
<reference key="1">
    <citation type="journal article" date="2004" name="Nucleic Acids Res.">
        <title>Unique features revealed by the genome sequence of Acinetobacter sp. ADP1, a versatile and naturally transformation competent bacterium.</title>
        <authorList>
            <person name="Barbe V."/>
            <person name="Vallenet D."/>
            <person name="Fonknechten N."/>
            <person name="Kreimeyer A."/>
            <person name="Oztas S."/>
            <person name="Labarre L."/>
            <person name="Cruveiller S."/>
            <person name="Robert C."/>
            <person name="Duprat S."/>
            <person name="Wincker P."/>
            <person name="Ornston L.N."/>
            <person name="Weissenbach J."/>
            <person name="Marliere P."/>
            <person name="Cohen G.N."/>
            <person name="Medigue C."/>
        </authorList>
    </citation>
    <scope>NUCLEOTIDE SEQUENCE [LARGE SCALE GENOMIC DNA]</scope>
    <source>
        <strain>ATCC 33305 / BD413 / ADP1</strain>
    </source>
</reference>
<reference key="2">
    <citation type="journal article" date="2010" name="J. Biol. Chem.">
        <title>Genomics-driven reconstruction of acinetobacter NAD metabolism: insights for antibacterial target selection.</title>
        <authorList>
            <person name="Sorci L."/>
            <person name="Blaby I."/>
            <person name="De Ingeniis J."/>
            <person name="Gerdes S."/>
            <person name="Raffaelli N."/>
            <person name="de Crecy Lagard V."/>
            <person name="Osterman A."/>
        </authorList>
    </citation>
    <scope>FUNCTION</scope>
    <scope>CATALYTIC ACTIVITY</scope>
    <scope>BIOPHYSICOCHEMICAL PROPERTIES</scope>
    <scope>PATHWAY</scope>
    <scope>DISRUPTION PHENOTYPE</scope>
    <scope>IDENTIFICATION AS A DRUG TARGET</scope>
    <source>
        <strain>ATCC 33305 / BD413 / ADP1</strain>
    </source>
</reference>
<evidence type="ECO:0000269" key="1">
    <source>
    </source>
</evidence>
<evidence type="ECO:0000303" key="2">
    <source>
    </source>
</evidence>
<evidence type="ECO:0000305" key="3"/>
<evidence type="ECO:0000312" key="4">
    <source>
        <dbReference type="EMBL" id="CAG69366.1"/>
    </source>
</evidence>